<sequence>MIGIDIVSISRIDEMINKFGEKALKRFLNESEILLTKSSQNAAGFWAAKEAFSKALGTGIGSECSFLDIEISKDQKGKPFFTTKTLNKFNIKQADLSISHDGGFAIAAVILLK</sequence>
<evidence type="ECO:0000255" key="1">
    <source>
        <dbReference type="HAMAP-Rule" id="MF_00101"/>
    </source>
</evidence>
<reference key="1">
    <citation type="journal article" date="2009" name="PLoS Genet.">
        <title>Adaptations to submarine hydrothermal environments exemplified by the genome of Nautilia profundicola.</title>
        <authorList>
            <person name="Campbell B.J."/>
            <person name="Smith J.L."/>
            <person name="Hanson T.E."/>
            <person name="Klotz M.G."/>
            <person name="Stein L.Y."/>
            <person name="Lee C.K."/>
            <person name="Wu D."/>
            <person name="Robinson J.M."/>
            <person name="Khouri H.M."/>
            <person name="Eisen J.A."/>
            <person name="Cary S.C."/>
        </authorList>
    </citation>
    <scope>NUCLEOTIDE SEQUENCE [LARGE SCALE GENOMIC DNA]</scope>
    <source>
        <strain>ATCC BAA-1463 / DSM 18972 / AmH</strain>
    </source>
</reference>
<name>ACPS_NAUPA</name>
<keyword id="KW-0963">Cytoplasm</keyword>
<keyword id="KW-0275">Fatty acid biosynthesis</keyword>
<keyword id="KW-0276">Fatty acid metabolism</keyword>
<keyword id="KW-0444">Lipid biosynthesis</keyword>
<keyword id="KW-0443">Lipid metabolism</keyword>
<keyword id="KW-0460">Magnesium</keyword>
<keyword id="KW-0479">Metal-binding</keyword>
<keyword id="KW-0808">Transferase</keyword>
<gene>
    <name evidence="1" type="primary">acpS</name>
    <name type="ordered locus">NAMH_0977</name>
</gene>
<feature type="chain" id="PRO_1000118820" description="Holo-[acyl-carrier-protein] synthase">
    <location>
        <begin position="1"/>
        <end position="113"/>
    </location>
</feature>
<feature type="binding site" evidence="1">
    <location>
        <position position="5"/>
    </location>
    <ligand>
        <name>Mg(2+)</name>
        <dbReference type="ChEBI" id="CHEBI:18420"/>
    </ligand>
</feature>
<feature type="binding site" evidence="1">
    <location>
        <position position="50"/>
    </location>
    <ligand>
        <name>Mg(2+)</name>
        <dbReference type="ChEBI" id="CHEBI:18420"/>
    </ligand>
</feature>
<proteinExistence type="inferred from homology"/>
<dbReference type="EC" id="2.7.8.7" evidence="1"/>
<dbReference type="EMBL" id="CP001279">
    <property type="protein sequence ID" value="ACM92595.1"/>
    <property type="molecule type" value="Genomic_DNA"/>
</dbReference>
<dbReference type="RefSeq" id="WP_012663966.1">
    <property type="nucleotide sequence ID" value="NC_012115.1"/>
</dbReference>
<dbReference type="SMR" id="B9L9S0"/>
<dbReference type="STRING" id="598659.NAMH_0977"/>
<dbReference type="KEGG" id="nam:NAMH_0977"/>
<dbReference type="eggNOG" id="COG0736">
    <property type="taxonomic scope" value="Bacteria"/>
</dbReference>
<dbReference type="HOGENOM" id="CLU_089696_0_2_7"/>
<dbReference type="OrthoDB" id="517356at2"/>
<dbReference type="Proteomes" id="UP000000448">
    <property type="component" value="Chromosome"/>
</dbReference>
<dbReference type="GO" id="GO:0005737">
    <property type="term" value="C:cytoplasm"/>
    <property type="evidence" value="ECO:0007669"/>
    <property type="project" value="UniProtKB-SubCell"/>
</dbReference>
<dbReference type="GO" id="GO:0008897">
    <property type="term" value="F:holo-[acyl-carrier-protein] synthase activity"/>
    <property type="evidence" value="ECO:0007669"/>
    <property type="project" value="UniProtKB-UniRule"/>
</dbReference>
<dbReference type="GO" id="GO:0000287">
    <property type="term" value="F:magnesium ion binding"/>
    <property type="evidence" value="ECO:0007669"/>
    <property type="project" value="UniProtKB-UniRule"/>
</dbReference>
<dbReference type="GO" id="GO:0006633">
    <property type="term" value="P:fatty acid biosynthetic process"/>
    <property type="evidence" value="ECO:0007669"/>
    <property type="project" value="UniProtKB-UniRule"/>
</dbReference>
<dbReference type="Gene3D" id="3.90.470.20">
    <property type="entry name" value="4'-phosphopantetheinyl transferase domain"/>
    <property type="match status" value="1"/>
</dbReference>
<dbReference type="HAMAP" id="MF_00101">
    <property type="entry name" value="AcpS"/>
    <property type="match status" value="1"/>
</dbReference>
<dbReference type="InterPro" id="IPR008278">
    <property type="entry name" value="4-PPantetheinyl_Trfase_dom"/>
</dbReference>
<dbReference type="InterPro" id="IPR037143">
    <property type="entry name" value="4-PPantetheinyl_Trfase_dom_sf"/>
</dbReference>
<dbReference type="InterPro" id="IPR002582">
    <property type="entry name" value="ACPS"/>
</dbReference>
<dbReference type="InterPro" id="IPR004568">
    <property type="entry name" value="Ppantetheine-prot_Trfase_dom"/>
</dbReference>
<dbReference type="NCBIfam" id="TIGR00516">
    <property type="entry name" value="acpS"/>
    <property type="match status" value="1"/>
</dbReference>
<dbReference type="NCBIfam" id="TIGR00556">
    <property type="entry name" value="pantethn_trn"/>
    <property type="match status" value="1"/>
</dbReference>
<dbReference type="Pfam" id="PF01648">
    <property type="entry name" value="ACPS"/>
    <property type="match status" value="1"/>
</dbReference>
<dbReference type="SUPFAM" id="SSF56214">
    <property type="entry name" value="4'-phosphopantetheinyl transferase"/>
    <property type="match status" value="1"/>
</dbReference>
<protein>
    <recommendedName>
        <fullName evidence="1">Holo-[acyl-carrier-protein] synthase</fullName>
        <shortName evidence="1">Holo-ACP synthase</shortName>
        <ecNumber evidence="1">2.7.8.7</ecNumber>
    </recommendedName>
    <alternativeName>
        <fullName evidence="1">4'-phosphopantetheinyl transferase AcpS</fullName>
    </alternativeName>
</protein>
<organism>
    <name type="scientific">Nautilia profundicola (strain ATCC BAA-1463 / DSM 18972 / AmH)</name>
    <dbReference type="NCBI Taxonomy" id="598659"/>
    <lineage>
        <taxon>Bacteria</taxon>
        <taxon>Pseudomonadati</taxon>
        <taxon>Campylobacterota</taxon>
        <taxon>Epsilonproteobacteria</taxon>
        <taxon>Nautiliales</taxon>
        <taxon>Nautiliaceae</taxon>
        <taxon>Nautilia</taxon>
    </lineage>
</organism>
<comment type="function">
    <text evidence="1">Transfers the 4'-phosphopantetheine moiety from coenzyme A to a Ser of acyl-carrier-protein.</text>
</comment>
<comment type="catalytic activity">
    <reaction evidence="1">
        <text>apo-[ACP] + CoA = holo-[ACP] + adenosine 3',5'-bisphosphate + H(+)</text>
        <dbReference type="Rhea" id="RHEA:12068"/>
        <dbReference type="Rhea" id="RHEA-COMP:9685"/>
        <dbReference type="Rhea" id="RHEA-COMP:9690"/>
        <dbReference type="ChEBI" id="CHEBI:15378"/>
        <dbReference type="ChEBI" id="CHEBI:29999"/>
        <dbReference type="ChEBI" id="CHEBI:57287"/>
        <dbReference type="ChEBI" id="CHEBI:58343"/>
        <dbReference type="ChEBI" id="CHEBI:64479"/>
        <dbReference type="EC" id="2.7.8.7"/>
    </reaction>
</comment>
<comment type="cofactor">
    <cofactor evidence="1">
        <name>Mg(2+)</name>
        <dbReference type="ChEBI" id="CHEBI:18420"/>
    </cofactor>
</comment>
<comment type="subcellular location">
    <subcellularLocation>
        <location evidence="1">Cytoplasm</location>
    </subcellularLocation>
</comment>
<comment type="similarity">
    <text evidence="1">Belongs to the P-Pant transferase superfamily. AcpS family.</text>
</comment>
<accession>B9L9S0</accession>